<organism>
    <name type="scientific">Yersinia pseudotuberculosis serotype O:3 (strain YPIII)</name>
    <dbReference type="NCBI Taxonomy" id="502800"/>
    <lineage>
        <taxon>Bacteria</taxon>
        <taxon>Pseudomonadati</taxon>
        <taxon>Pseudomonadota</taxon>
        <taxon>Gammaproteobacteria</taxon>
        <taxon>Enterobacterales</taxon>
        <taxon>Yersiniaceae</taxon>
        <taxon>Yersinia</taxon>
    </lineage>
</organism>
<dbReference type="EC" id="2.8.1.10" evidence="1"/>
<dbReference type="EMBL" id="CP000950">
    <property type="protein sequence ID" value="ACA66653.1"/>
    <property type="molecule type" value="Genomic_DNA"/>
</dbReference>
<dbReference type="RefSeq" id="WP_012303439.1">
    <property type="nucleotide sequence ID" value="NZ_CP009792.1"/>
</dbReference>
<dbReference type="SMR" id="B1JJK2"/>
<dbReference type="KEGG" id="ypy:YPK_0343"/>
<dbReference type="PATRIC" id="fig|502800.11.peg.947"/>
<dbReference type="UniPathway" id="UPA00060"/>
<dbReference type="GO" id="GO:0005737">
    <property type="term" value="C:cytoplasm"/>
    <property type="evidence" value="ECO:0007669"/>
    <property type="project" value="UniProtKB-SubCell"/>
</dbReference>
<dbReference type="GO" id="GO:1990107">
    <property type="term" value="F:thiazole synthase activity"/>
    <property type="evidence" value="ECO:0007669"/>
    <property type="project" value="UniProtKB-EC"/>
</dbReference>
<dbReference type="GO" id="GO:0009229">
    <property type="term" value="P:thiamine diphosphate biosynthetic process"/>
    <property type="evidence" value="ECO:0007669"/>
    <property type="project" value="UniProtKB-UniRule"/>
</dbReference>
<dbReference type="CDD" id="cd04728">
    <property type="entry name" value="ThiG"/>
    <property type="match status" value="1"/>
</dbReference>
<dbReference type="FunFam" id="3.20.20.70:FF:000049">
    <property type="entry name" value="Thiazole synthase"/>
    <property type="match status" value="1"/>
</dbReference>
<dbReference type="Gene3D" id="3.20.20.70">
    <property type="entry name" value="Aldolase class I"/>
    <property type="match status" value="1"/>
</dbReference>
<dbReference type="HAMAP" id="MF_00443">
    <property type="entry name" value="ThiG"/>
    <property type="match status" value="1"/>
</dbReference>
<dbReference type="InterPro" id="IPR013785">
    <property type="entry name" value="Aldolase_TIM"/>
</dbReference>
<dbReference type="InterPro" id="IPR033983">
    <property type="entry name" value="Thiazole_synthase_ThiG"/>
</dbReference>
<dbReference type="InterPro" id="IPR008867">
    <property type="entry name" value="ThiG"/>
</dbReference>
<dbReference type="PANTHER" id="PTHR34266">
    <property type="entry name" value="THIAZOLE SYNTHASE"/>
    <property type="match status" value="1"/>
</dbReference>
<dbReference type="PANTHER" id="PTHR34266:SF2">
    <property type="entry name" value="THIAZOLE SYNTHASE"/>
    <property type="match status" value="1"/>
</dbReference>
<dbReference type="Pfam" id="PF05690">
    <property type="entry name" value="ThiG"/>
    <property type="match status" value="1"/>
</dbReference>
<dbReference type="SUPFAM" id="SSF110399">
    <property type="entry name" value="ThiG-like"/>
    <property type="match status" value="1"/>
</dbReference>
<evidence type="ECO:0000255" key="1">
    <source>
        <dbReference type="HAMAP-Rule" id="MF_00443"/>
    </source>
</evidence>
<keyword id="KW-0963">Cytoplasm</keyword>
<keyword id="KW-0704">Schiff base</keyword>
<keyword id="KW-0784">Thiamine biosynthesis</keyword>
<keyword id="KW-0808">Transferase</keyword>
<accession>B1JJK2</accession>
<name>THIG_YERPY</name>
<reference key="1">
    <citation type="submission" date="2008-02" db="EMBL/GenBank/DDBJ databases">
        <title>Complete sequence of Yersinia pseudotuberculosis YPIII.</title>
        <authorList>
            <consortium name="US DOE Joint Genome Institute"/>
            <person name="Copeland A."/>
            <person name="Lucas S."/>
            <person name="Lapidus A."/>
            <person name="Glavina del Rio T."/>
            <person name="Dalin E."/>
            <person name="Tice H."/>
            <person name="Bruce D."/>
            <person name="Goodwin L."/>
            <person name="Pitluck S."/>
            <person name="Munk A.C."/>
            <person name="Brettin T."/>
            <person name="Detter J.C."/>
            <person name="Han C."/>
            <person name="Tapia R."/>
            <person name="Schmutz J."/>
            <person name="Larimer F."/>
            <person name="Land M."/>
            <person name="Hauser L."/>
            <person name="Challacombe J.F."/>
            <person name="Green L."/>
            <person name="Lindler L.E."/>
            <person name="Nikolich M.P."/>
            <person name="Richardson P."/>
        </authorList>
    </citation>
    <scope>NUCLEOTIDE SEQUENCE [LARGE SCALE GENOMIC DNA]</scope>
    <source>
        <strain>YPIII</strain>
    </source>
</reference>
<gene>
    <name evidence="1" type="primary">thiG</name>
    <name type="ordered locus">YPK_0343</name>
</gene>
<proteinExistence type="inferred from homology"/>
<protein>
    <recommendedName>
        <fullName evidence="1">Thiazole synthase</fullName>
        <ecNumber evidence="1">2.8.1.10</ecNumber>
    </recommendedName>
</protein>
<sequence>MLKIADTTFTSRLFTGTGKFSSPELMLEALRASGSQLITMAMKRVDLQSGNDAILAPLRQLGVRLLPNTSGAKTAEEAIFAARLAREALNTHWVKLEIHPDVRYLLPDPIETLKAAEVLVKEGFVVLPYCGADPVLCKRLEEVGCAAVMPLGSPIGSNLGLRTRDFLQIIIEQSKVPVVVDAGIGAPSHALEALELGADAVLVNTAIAVAHSPVQMAHAFRLAVESGERARLAGLGASPFNPSQPDTLQLRATATSPLTGFLSQLEEQEHV</sequence>
<feature type="chain" id="PRO_1000196917" description="Thiazole synthase">
    <location>
        <begin position="1"/>
        <end position="271"/>
    </location>
</feature>
<feature type="active site" description="Schiff-base intermediate with DXP" evidence="1">
    <location>
        <position position="95"/>
    </location>
</feature>
<feature type="binding site" evidence="1">
    <location>
        <position position="156"/>
    </location>
    <ligand>
        <name>1-deoxy-D-xylulose 5-phosphate</name>
        <dbReference type="ChEBI" id="CHEBI:57792"/>
    </ligand>
</feature>
<feature type="binding site" evidence="1">
    <location>
        <begin position="182"/>
        <end position="183"/>
    </location>
    <ligand>
        <name>1-deoxy-D-xylulose 5-phosphate</name>
        <dbReference type="ChEBI" id="CHEBI:57792"/>
    </ligand>
</feature>
<feature type="binding site" evidence="1">
    <location>
        <begin position="204"/>
        <end position="205"/>
    </location>
    <ligand>
        <name>1-deoxy-D-xylulose 5-phosphate</name>
        <dbReference type="ChEBI" id="CHEBI:57792"/>
    </ligand>
</feature>
<comment type="function">
    <text evidence="1">Catalyzes the rearrangement of 1-deoxy-D-xylulose 5-phosphate (DXP) to produce the thiazole phosphate moiety of thiamine. Sulfur is provided by the thiocarboxylate moiety of the carrier protein ThiS. In vitro, sulfur can be provided by H(2)S.</text>
</comment>
<comment type="catalytic activity">
    <reaction evidence="1">
        <text>[ThiS sulfur-carrier protein]-C-terminal-Gly-aminoethanethioate + 2-iminoacetate + 1-deoxy-D-xylulose 5-phosphate = [ThiS sulfur-carrier protein]-C-terminal Gly-Gly + 2-[(2R,5Z)-2-carboxy-4-methylthiazol-5(2H)-ylidene]ethyl phosphate + 2 H2O + H(+)</text>
        <dbReference type="Rhea" id="RHEA:26297"/>
        <dbReference type="Rhea" id="RHEA-COMP:12909"/>
        <dbReference type="Rhea" id="RHEA-COMP:19908"/>
        <dbReference type="ChEBI" id="CHEBI:15377"/>
        <dbReference type="ChEBI" id="CHEBI:15378"/>
        <dbReference type="ChEBI" id="CHEBI:57792"/>
        <dbReference type="ChEBI" id="CHEBI:62899"/>
        <dbReference type="ChEBI" id="CHEBI:77846"/>
        <dbReference type="ChEBI" id="CHEBI:90778"/>
        <dbReference type="ChEBI" id="CHEBI:232372"/>
        <dbReference type="EC" id="2.8.1.10"/>
    </reaction>
</comment>
<comment type="pathway">
    <text evidence="1">Cofactor biosynthesis; thiamine diphosphate biosynthesis.</text>
</comment>
<comment type="subunit">
    <text evidence="1">Homotetramer. Forms heterodimers with either ThiH or ThiS.</text>
</comment>
<comment type="subcellular location">
    <subcellularLocation>
        <location evidence="1">Cytoplasm</location>
    </subcellularLocation>
</comment>
<comment type="similarity">
    <text evidence="1">Belongs to the ThiG family.</text>
</comment>